<accession>P0CC65</accession>
<accession>A0ZZ79</accession>
<comment type="function">
    <text evidence="1">NDH shuttles electrons from NAD(P)H:plastoquinone, via FMN and iron-sulfur (Fe-S) centers, to quinones in the photosynthetic chain and possibly in a chloroplast respiratory chain. The immediate electron acceptor for the enzyme in this species is believed to be plastoquinone. Couples the redox reaction to proton translocation, and thus conserves the redox energy in a proton gradient.</text>
</comment>
<comment type="catalytic activity">
    <reaction evidence="1">
        <text>a plastoquinone + NADH + (n+1) H(+)(in) = a plastoquinol + NAD(+) + n H(+)(out)</text>
        <dbReference type="Rhea" id="RHEA:42608"/>
        <dbReference type="Rhea" id="RHEA-COMP:9561"/>
        <dbReference type="Rhea" id="RHEA-COMP:9562"/>
        <dbReference type="ChEBI" id="CHEBI:15378"/>
        <dbReference type="ChEBI" id="CHEBI:17757"/>
        <dbReference type="ChEBI" id="CHEBI:57540"/>
        <dbReference type="ChEBI" id="CHEBI:57945"/>
        <dbReference type="ChEBI" id="CHEBI:62192"/>
    </reaction>
</comment>
<comment type="catalytic activity">
    <reaction evidence="1">
        <text>a plastoquinone + NADPH + (n+1) H(+)(in) = a plastoquinol + NADP(+) + n H(+)(out)</text>
        <dbReference type="Rhea" id="RHEA:42612"/>
        <dbReference type="Rhea" id="RHEA-COMP:9561"/>
        <dbReference type="Rhea" id="RHEA-COMP:9562"/>
        <dbReference type="ChEBI" id="CHEBI:15378"/>
        <dbReference type="ChEBI" id="CHEBI:17757"/>
        <dbReference type="ChEBI" id="CHEBI:57783"/>
        <dbReference type="ChEBI" id="CHEBI:58349"/>
        <dbReference type="ChEBI" id="CHEBI:62192"/>
    </reaction>
</comment>
<comment type="subunit">
    <text evidence="1">NDH is composed of at least 16 different subunits, 5 of which are encoded in the nucleus.</text>
</comment>
<comment type="subcellular location">
    <subcellularLocation>
        <location evidence="1">Plastid</location>
        <location evidence="1">Chloroplast thylakoid membrane</location>
        <topology evidence="1">Multi-pass membrane protein</topology>
    </subcellularLocation>
</comment>
<comment type="similarity">
    <text evidence="1">Belongs to the complex I subunit 2 family.</text>
</comment>
<organism>
    <name type="scientific">Gossypium barbadense</name>
    <name type="common">Sea Island cotton</name>
    <name type="synonym">Hibiscus barbadensis</name>
    <dbReference type="NCBI Taxonomy" id="3634"/>
    <lineage>
        <taxon>Eukaryota</taxon>
        <taxon>Viridiplantae</taxon>
        <taxon>Streptophyta</taxon>
        <taxon>Embryophyta</taxon>
        <taxon>Tracheophyta</taxon>
        <taxon>Spermatophyta</taxon>
        <taxon>Magnoliopsida</taxon>
        <taxon>eudicotyledons</taxon>
        <taxon>Gunneridae</taxon>
        <taxon>Pentapetalae</taxon>
        <taxon>rosids</taxon>
        <taxon>malvids</taxon>
        <taxon>Malvales</taxon>
        <taxon>Malvaceae</taxon>
        <taxon>Malvoideae</taxon>
        <taxon>Gossypium</taxon>
    </lineage>
</organism>
<name>NU2C2_GOSBA</name>
<proteinExistence type="inferred from homology"/>
<keyword id="KW-0150">Chloroplast</keyword>
<keyword id="KW-0472">Membrane</keyword>
<keyword id="KW-0520">NAD</keyword>
<keyword id="KW-0521">NADP</keyword>
<keyword id="KW-0934">Plastid</keyword>
<keyword id="KW-0618">Plastoquinone</keyword>
<keyword id="KW-0874">Quinone</keyword>
<keyword id="KW-0793">Thylakoid</keyword>
<keyword id="KW-1278">Translocase</keyword>
<keyword id="KW-0812">Transmembrane</keyword>
<keyword id="KW-1133">Transmembrane helix</keyword>
<keyword id="KW-0813">Transport</keyword>
<geneLocation type="chloroplast"/>
<protein>
    <recommendedName>
        <fullName evidence="1">NAD(P)H-quinone oxidoreductase subunit 2 B, chloroplastic</fullName>
        <ecNumber evidence="1">7.1.1.-</ecNumber>
    </recommendedName>
    <alternativeName>
        <fullName evidence="1">NAD(P)H dehydrogenase, subunit 2 B</fullName>
    </alternativeName>
    <alternativeName>
        <fullName evidence="1">NADH-plastoquinone oxidoreductase subunit 2 B</fullName>
    </alternativeName>
</protein>
<feature type="chain" id="PRO_0000391270" description="NAD(P)H-quinone oxidoreductase subunit 2 B, chloroplastic">
    <location>
        <begin position="1"/>
        <end position="510"/>
    </location>
</feature>
<feature type="transmembrane region" description="Helical" evidence="1">
    <location>
        <begin position="24"/>
        <end position="44"/>
    </location>
</feature>
<feature type="transmembrane region" description="Helical" evidence="1">
    <location>
        <begin position="57"/>
        <end position="77"/>
    </location>
</feature>
<feature type="transmembrane region" description="Helical" evidence="1">
    <location>
        <begin position="99"/>
        <end position="119"/>
    </location>
</feature>
<feature type="transmembrane region" description="Helical" evidence="1">
    <location>
        <begin position="124"/>
        <end position="144"/>
    </location>
</feature>
<feature type="transmembrane region" description="Helical" evidence="1">
    <location>
        <begin position="149"/>
        <end position="169"/>
    </location>
</feature>
<feature type="transmembrane region" description="Helical" evidence="1">
    <location>
        <begin position="183"/>
        <end position="203"/>
    </location>
</feature>
<feature type="transmembrane region" description="Helical" evidence="1">
    <location>
        <begin position="227"/>
        <end position="247"/>
    </location>
</feature>
<feature type="transmembrane region" description="Helical" evidence="1">
    <location>
        <begin position="295"/>
        <end position="315"/>
    </location>
</feature>
<feature type="transmembrane region" description="Helical" evidence="1">
    <location>
        <begin position="323"/>
        <end position="343"/>
    </location>
</feature>
<feature type="transmembrane region" description="Helical" evidence="1">
    <location>
        <begin position="354"/>
        <end position="374"/>
    </location>
</feature>
<feature type="transmembrane region" description="Helical" evidence="1">
    <location>
        <begin position="395"/>
        <end position="415"/>
    </location>
</feature>
<feature type="transmembrane region" description="Helical" evidence="1">
    <location>
        <begin position="418"/>
        <end position="438"/>
    </location>
</feature>
<feature type="transmembrane region" description="Helical" evidence="1">
    <location>
        <begin position="484"/>
        <end position="504"/>
    </location>
</feature>
<evidence type="ECO:0000255" key="1">
    <source>
        <dbReference type="HAMAP-Rule" id="MF_00445"/>
    </source>
</evidence>
<gene>
    <name evidence="1" type="primary">ndhB2</name>
</gene>
<dbReference type="EC" id="7.1.1.-" evidence="1"/>
<dbReference type="EMBL" id="AP009123">
    <property type="protein sequence ID" value="BAF41307.1"/>
    <property type="molecule type" value="Genomic_DNA"/>
</dbReference>
<dbReference type="SMR" id="P0CC65"/>
<dbReference type="GO" id="GO:0009535">
    <property type="term" value="C:chloroplast thylakoid membrane"/>
    <property type="evidence" value="ECO:0007669"/>
    <property type="project" value="UniProtKB-SubCell"/>
</dbReference>
<dbReference type="GO" id="GO:0008137">
    <property type="term" value="F:NADH dehydrogenase (ubiquinone) activity"/>
    <property type="evidence" value="ECO:0007669"/>
    <property type="project" value="InterPro"/>
</dbReference>
<dbReference type="GO" id="GO:0048038">
    <property type="term" value="F:quinone binding"/>
    <property type="evidence" value="ECO:0007669"/>
    <property type="project" value="UniProtKB-KW"/>
</dbReference>
<dbReference type="GO" id="GO:0042773">
    <property type="term" value="P:ATP synthesis coupled electron transport"/>
    <property type="evidence" value="ECO:0007669"/>
    <property type="project" value="InterPro"/>
</dbReference>
<dbReference type="GO" id="GO:0019684">
    <property type="term" value="P:photosynthesis, light reaction"/>
    <property type="evidence" value="ECO:0007669"/>
    <property type="project" value="UniProtKB-UniRule"/>
</dbReference>
<dbReference type="HAMAP" id="MF_00445">
    <property type="entry name" value="NDH1_NuoN_1"/>
    <property type="match status" value="1"/>
</dbReference>
<dbReference type="InterPro" id="IPR010096">
    <property type="entry name" value="NADH-Q_OxRdtase_suN/2"/>
</dbReference>
<dbReference type="InterPro" id="IPR001750">
    <property type="entry name" value="ND/Mrp_TM"/>
</dbReference>
<dbReference type="InterPro" id="IPR045693">
    <property type="entry name" value="Ndh2_N"/>
</dbReference>
<dbReference type="NCBIfam" id="TIGR01770">
    <property type="entry name" value="NDH_I_N"/>
    <property type="match status" value="1"/>
</dbReference>
<dbReference type="NCBIfam" id="NF002701">
    <property type="entry name" value="PRK02504.1"/>
    <property type="match status" value="1"/>
</dbReference>
<dbReference type="PANTHER" id="PTHR22773">
    <property type="entry name" value="NADH DEHYDROGENASE"/>
    <property type="match status" value="1"/>
</dbReference>
<dbReference type="Pfam" id="PF19530">
    <property type="entry name" value="Ndh2_N"/>
    <property type="match status" value="1"/>
</dbReference>
<dbReference type="Pfam" id="PF00361">
    <property type="entry name" value="Proton_antipo_M"/>
    <property type="match status" value="1"/>
</dbReference>
<dbReference type="PRINTS" id="PR01434">
    <property type="entry name" value="NADHDHGNASE5"/>
</dbReference>
<reference key="1">
    <citation type="journal article" date="2006" name="Genes Genet. Syst.">
        <title>Complete nucleotide sequence of the cotton (Gossypium barbadense L.) chloroplast genome with a comparative analysis of sequences among 9 dicot plants.</title>
        <authorList>
            <person name="Ibrahim R.I.H."/>
            <person name="Azuma J."/>
            <person name="Sakamoto M."/>
        </authorList>
    </citation>
    <scope>NUCLEOTIDE SEQUENCE [LARGE SCALE GENOMIC DNA]</scope>
</reference>
<sequence>MIWHVQNENFILDSTRIFMKAFHLLLFDGSFIFPECILIFGLILLLMIDSTSDQKDIPWLYFISSTSLVMSITALLFRWREEPMISFSGNFQTNNFNEIFQFLILLCSTLCIPLSVEYIECTEMAIAEFLLFVLTATLGGMFLCGANDLITIFVAPECFSLCSYLLSGYTKKDVRSNEATTKYLLMGGASSSILVHGFSWLYGSSGGEIELQEIVNGLINTQMYNSPGISIALIFITVGIGFKLSPAPSHQWTPDVYEGSPTPVVAFLSVTSKVAASASATRIFDIPFYFSSNEWHLLLEILAILSMILGNLIAITQTSMKRMLAYSSIGQIGYVIIGIIVGNSNGGYASMITYMLFYISMNLGTFACIVLFGLRTGTDNIRDYAGLYTKDPFLALSLAPCLLSLGGLPPLAGFFGKLHLFWCGWQAGLYFLVSIGLLTSVVSIYYYLKIIKLLMTGRNQEITPHVRNYRRSPLRSNNSIELSMIVCVIASTIPGISMNPIIAIAQDTLF</sequence>